<comment type="function">
    <text evidence="1">Catalyzes the dephosphorylation of undecaprenyl diphosphate (UPP). Confers resistance to bacitracin.</text>
</comment>
<comment type="catalytic activity">
    <reaction evidence="1">
        <text>di-trans,octa-cis-undecaprenyl diphosphate + H2O = di-trans,octa-cis-undecaprenyl phosphate + phosphate + H(+)</text>
        <dbReference type="Rhea" id="RHEA:28094"/>
        <dbReference type="ChEBI" id="CHEBI:15377"/>
        <dbReference type="ChEBI" id="CHEBI:15378"/>
        <dbReference type="ChEBI" id="CHEBI:43474"/>
        <dbReference type="ChEBI" id="CHEBI:58405"/>
        <dbReference type="ChEBI" id="CHEBI:60392"/>
        <dbReference type="EC" id="3.6.1.27"/>
    </reaction>
</comment>
<comment type="subcellular location">
    <subcellularLocation>
        <location evidence="1">Cell membrane</location>
        <topology evidence="1">Multi-pass membrane protein</topology>
    </subcellularLocation>
</comment>
<comment type="miscellaneous">
    <text>Bacitracin is thought to be involved in the inhibition of peptidoglycan synthesis by sequestering undecaprenyl diphosphate, thereby reducing the pool of lipid carrier available.</text>
</comment>
<comment type="similarity">
    <text evidence="1">Belongs to the UppP family.</text>
</comment>
<gene>
    <name evidence="1" type="primary">uppP</name>
    <name type="synonym">bacA</name>
    <name type="ordered locus">llmg_2476</name>
</gene>
<reference key="1">
    <citation type="journal article" date="2007" name="J. Bacteriol.">
        <title>The complete genome sequence of the lactic acid bacterial paradigm Lactococcus lactis subsp. cremoris MG1363.</title>
        <authorList>
            <person name="Wegmann U."/>
            <person name="O'Connell-Motherway M."/>
            <person name="Zomer A."/>
            <person name="Buist G."/>
            <person name="Shearman C."/>
            <person name="Canchaya C."/>
            <person name="Ventura M."/>
            <person name="Goesmann A."/>
            <person name="Gasson M.J."/>
            <person name="Kuipers O.P."/>
            <person name="van Sinderen D."/>
            <person name="Kok J."/>
        </authorList>
    </citation>
    <scope>NUCLEOTIDE SEQUENCE [LARGE SCALE GENOMIC DNA]</scope>
    <source>
        <strain>MG1363</strain>
    </source>
</reference>
<feature type="chain" id="PRO_0000290718" description="Undecaprenyl-diphosphatase">
    <location>
        <begin position="1"/>
        <end position="284"/>
    </location>
</feature>
<feature type="transmembrane region" description="Helical" evidence="1">
    <location>
        <begin position="7"/>
        <end position="27"/>
    </location>
</feature>
<feature type="transmembrane region" description="Helical" evidence="1">
    <location>
        <begin position="44"/>
        <end position="64"/>
    </location>
</feature>
<feature type="transmembrane region" description="Helical" evidence="1">
    <location>
        <begin position="90"/>
        <end position="110"/>
    </location>
</feature>
<feature type="transmembrane region" description="Helical" evidence="1">
    <location>
        <begin position="116"/>
        <end position="136"/>
    </location>
</feature>
<feature type="transmembrane region" description="Helical" evidence="1">
    <location>
        <begin position="167"/>
        <end position="187"/>
    </location>
</feature>
<feature type="transmembrane region" description="Helical" evidence="1">
    <location>
        <begin position="197"/>
        <end position="217"/>
    </location>
</feature>
<feature type="transmembrane region" description="Helical" evidence="1">
    <location>
        <begin position="229"/>
        <end position="249"/>
    </location>
</feature>
<feature type="transmembrane region" description="Helical" evidence="1">
    <location>
        <begin position="259"/>
        <end position="279"/>
    </location>
</feature>
<name>UPPP_LACLM</name>
<keyword id="KW-0046">Antibiotic resistance</keyword>
<keyword id="KW-1003">Cell membrane</keyword>
<keyword id="KW-0133">Cell shape</keyword>
<keyword id="KW-0961">Cell wall biogenesis/degradation</keyword>
<keyword id="KW-0378">Hydrolase</keyword>
<keyword id="KW-0472">Membrane</keyword>
<keyword id="KW-0573">Peptidoglycan synthesis</keyword>
<keyword id="KW-0812">Transmembrane</keyword>
<keyword id="KW-1133">Transmembrane helix</keyword>
<proteinExistence type="inferred from homology"/>
<dbReference type="EC" id="3.6.1.27" evidence="1"/>
<dbReference type="EMBL" id="AM406671">
    <property type="protein sequence ID" value="CAL99040.1"/>
    <property type="molecule type" value="Genomic_DNA"/>
</dbReference>
<dbReference type="RefSeq" id="WP_011836105.1">
    <property type="nucleotide sequence ID" value="NC_009004.1"/>
</dbReference>
<dbReference type="SMR" id="A2RNZ5"/>
<dbReference type="STRING" id="416870.llmg_2476"/>
<dbReference type="KEGG" id="llm:llmg_2476"/>
<dbReference type="eggNOG" id="COG1968">
    <property type="taxonomic scope" value="Bacteria"/>
</dbReference>
<dbReference type="HOGENOM" id="CLU_060296_2_0_9"/>
<dbReference type="OrthoDB" id="9808289at2"/>
<dbReference type="PhylomeDB" id="A2RNZ5"/>
<dbReference type="Proteomes" id="UP000000364">
    <property type="component" value="Chromosome"/>
</dbReference>
<dbReference type="GO" id="GO:0005886">
    <property type="term" value="C:plasma membrane"/>
    <property type="evidence" value="ECO:0007669"/>
    <property type="project" value="UniProtKB-SubCell"/>
</dbReference>
<dbReference type="GO" id="GO:0050380">
    <property type="term" value="F:undecaprenyl-diphosphatase activity"/>
    <property type="evidence" value="ECO:0007669"/>
    <property type="project" value="UniProtKB-UniRule"/>
</dbReference>
<dbReference type="GO" id="GO:0071555">
    <property type="term" value="P:cell wall organization"/>
    <property type="evidence" value="ECO:0007669"/>
    <property type="project" value="UniProtKB-KW"/>
</dbReference>
<dbReference type="GO" id="GO:0009252">
    <property type="term" value="P:peptidoglycan biosynthetic process"/>
    <property type="evidence" value="ECO:0007669"/>
    <property type="project" value="UniProtKB-KW"/>
</dbReference>
<dbReference type="GO" id="GO:0008360">
    <property type="term" value="P:regulation of cell shape"/>
    <property type="evidence" value="ECO:0007669"/>
    <property type="project" value="UniProtKB-KW"/>
</dbReference>
<dbReference type="GO" id="GO:0046677">
    <property type="term" value="P:response to antibiotic"/>
    <property type="evidence" value="ECO:0007669"/>
    <property type="project" value="UniProtKB-UniRule"/>
</dbReference>
<dbReference type="HAMAP" id="MF_01006">
    <property type="entry name" value="Undec_diphosphatase"/>
    <property type="match status" value="1"/>
</dbReference>
<dbReference type="InterPro" id="IPR003824">
    <property type="entry name" value="UppP"/>
</dbReference>
<dbReference type="NCBIfam" id="NF001390">
    <property type="entry name" value="PRK00281.1-4"/>
    <property type="match status" value="1"/>
</dbReference>
<dbReference type="NCBIfam" id="NF001391">
    <property type="entry name" value="PRK00281.1-5"/>
    <property type="match status" value="1"/>
</dbReference>
<dbReference type="NCBIfam" id="TIGR00753">
    <property type="entry name" value="undec_PP_bacA"/>
    <property type="match status" value="1"/>
</dbReference>
<dbReference type="PANTHER" id="PTHR30622">
    <property type="entry name" value="UNDECAPRENYL-DIPHOSPHATASE"/>
    <property type="match status" value="1"/>
</dbReference>
<dbReference type="PANTHER" id="PTHR30622:SF3">
    <property type="entry name" value="UNDECAPRENYL-DIPHOSPHATASE"/>
    <property type="match status" value="1"/>
</dbReference>
<dbReference type="Pfam" id="PF02673">
    <property type="entry name" value="BacA"/>
    <property type="match status" value="1"/>
</dbReference>
<accession>A2RNZ5</accession>
<sequence>MDFIRAIILGIIEGITEWLPISSTGHLIIADEFIRLNQSAAFKEMFDVVIQLGAILSVVVLYFHKLNPFNKLNPADKQKTPREIQLTWRLWLKVLIAALPAAIIGLPLNDWLDKHFYHFVPVAFMLIIYGVAFIVIERRWVPNHEFSVMDIDRLPYRAALYIDLFQVLSLLPGTSRSGATIVGALLIGVSREVAAEFTFFLGIPVMFGASFIKILHFFKNGNSLNFEQFGVLLVACLVAFGVSMVAIKFLTDYVKKHDFTFFGKYRIVLGIVLLIYAAFKAFLG</sequence>
<evidence type="ECO:0000255" key="1">
    <source>
        <dbReference type="HAMAP-Rule" id="MF_01006"/>
    </source>
</evidence>
<protein>
    <recommendedName>
        <fullName evidence="1">Undecaprenyl-diphosphatase</fullName>
        <ecNumber evidence="1">3.6.1.27</ecNumber>
    </recommendedName>
    <alternativeName>
        <fullName evidence="1">Bacitracin resistance protein</fullName>
    </alternativeName>
    <alternativeName>
        <fullName evidence="1">Undecaprenyl pyrophosphate phosphatase</fullName>
    </alternativeName>
</protein>
<organism>
    <name type="scientific">Lactococcus lactis subsp. cremoris (strain MG1363)</name>
    <dbReference type="NCBI Taxonomy" id="416870"/>
    <lineage>
        <taxon>Bacteria</taxon>
        <taxon>Bacillati</taxon>
        <taxon>Bacillota</taxon>
        <taxon>Bacilli</taxon>
        <taxon>Lactobacillales</taxon>
        <taxon>Streptococcaceae</taxon>
        <taxon>Lactococcus</taxon>
        <taxon>Lactococcus cremoris subsp. cremoris</taxon>
    </lineage>
</organism>